<evidence type="ECO:0000255" key="1">
    <source>
        <dbReference type="HAMAP-Rule" id="MF_00023"/>
    </source>
</evidence>
<gene>
    <name evidence="1" type="primary">smpB</name>
    <name type="ordered locus">BU254</name>
</gene>
<organism>
    <name type="scientific">Buchnera aphidicola subsp. Acyrthosiphon pisum (strain APS)</name>
    <name type="common">Acyrthosiphon pisum symbiotic bacterium</name>
    <dbReference type="NCBI Taxonomy" id="107806"/>
    <lineage>
        <taxon>Bacteria</taxon>
        <taxon>Pseudomonadati</taxon>
        <taxon>Pseudomonadota</taxon>
        <taxon>Gammaproteobacteria</taxon>
        <taxon>Enterobacterales</taxon>
        <taxon>Erwiniaceae</taxon>
        <taxon>Buchnera</taxon>
    </lineage>
</organism>
<sequence>MLQKKKYQKKSSKIIINKKAYYNYFIEKVFQSGLVLEGWEIKSIRSGKVNISESYIINDRNEMYLCNCLIEPLQMSSNRFSCDPTRKKKLLLHKNEIDFLSLKKKNTGYTMVSLSLFWKKSWCKLEFGLAKGKTAQDKRINLKKREWEQEKLKILKKTKETY</sequence>
<protein>
    <recommendedName>
        <fullName evidence="1">SsrA-binding protein</fullName>
    </recommendedName>
    <alternativeName>
        <fullName evidence="1">Small protein B</fullName>
    </alternativeName>
</protein>
<proteinExistence type="inferred from homology"/>
<comment type="function">
    <text evidence="1">Required for rescue of stalled ribosomes mediated by trans-translation. Binds to transfer-messenger RNA (tmRNA), required for stable association of tmRNA with ribosomes. tmRNA and SmpB together mimic tRNA shape, replacing the anticodon stem-loop with SmpB. tmRNA is encoded by the ssrA gene; the 2 termini fold to resemble tRNA(Ala) and it encodes a 'tag peptide', a short internal open reading frame. During trans-translation Ala-aminoacylated tmRNA acts like a tRNA, entering the A-site of stalled ribosomes, displacing the stalled mRNA. The ribosome then switches to translate the ORF on the tmRNA; the nascent peptide is terminated with the 'tag peptide' encoded by the tmRNA and targeted for degradation. The ribosome is freed to recommence translation, which seems to be the essential function of trans-translation.</text>
</comment>
<comment type="subcellular location">
    <subcellularLocation>
        <location evidence="1">Cytoplasm</location>
    </subcellularLocation>
    <text evidence="1">The tmRNA-SmpB complex associates with stalled 70S ribosomes.</text>
</comment>
<comment type="similarity">
    <text evidence="1">Belongs to the SmpB family.</text>
</comment>
<accession>P57342</accession>
<feature type="chain" id="PRO_0000102920" description="SsrA-binding protein">
    <location>
        <begin position="1"/>
        <end position="162"/>
    </location>
</feature>
<keyword id="KW-0963">Cytoplasm</keyword>
<keyword id="KW-1185">Reference proteome</keyword>
<keyword id="KW-0694">RNA-binding</keyword>
<name>SSRP_BUCAI</name>
<reference key="1">
    <citation type="journal article" date="2000" name="Nature">
        <title>Genome sequence of the endocellular bacterial symbiont of aphids Buchnera sp. APS.</title>
        <authorList>
            <person name="Shigenobu S."/>
            <person name="Watanabe H."/>
            <person name="Hattori M."/>
            <person name="Sakaki Y."/>
            <person name="Ishikawa H."/>
        </authorList>
    </citation>
    <scope>NUCLEOTIDE SEQUENCE [LARGE SCALE GENOMIC DNA]</scope>
    <source>
        <strain>APS</strain>
    </source>
</reference>
<dbReference type="EMBL" id="BA000003">
    <property type="protein sequence ID" value="BAB12964.1"/>
    <property type="molecule type" value="Genomic_DNA"/>
</dbReference>
<dbReference type="RefSeq" id="NP_240078.1">
    <property type="nucleotide sequence ID" value="NC_002528.1"/>
</dbReference>
<dbReference type="RefSeq" id="WP_009874208.1">
    <property type="nucleotide sequence ID" value="NZ_AP036055.1"/>
</dbReference>
<dbReference type="SMR" id="P57342"/>
<dbReference type="STRING" id="563178.BUAP5A_249"/>
<dbReference type="EnsemblBacteria" id="BAB12964">
    <property type="protein sequence ID" value="BAB12964"/>
    <property type="gene ID" value="BAB12964"/>
</dbReference>
<dbReference type="KEGG" id="buc:BU254"/>
<dbReference type="PATRIC" id="fig|107806.10.peg.264"/>
<dbReference type="eggNOG" id="COG0691">
    <property type="taxonomic scope" value="Bacteria"/>
</dbReference>
<dbReference type="HOGENOM" id="CLU_108953_3_0_6"/>
<dbReference type="Proteomes" id="UP000001806">
    <property type="component" value="Chromosome"/>
</dbReference>
<dbReference type="GO" id="GO:0005829">
    <property type="term" value="C:cytosol"/>
    <property type="evidence" value="ECO:0007669"/>
    <property type="project" value="TreeGrafter"/>
</dbReference>
<dbReference type="GO" id="GO:0003723">
    <property type="term" value="F:RNA binding"/>
    <property type="evidence" value="ECO:0007669"/>
    <property type="project" value="UniProtKB-UniRule"/>
</dbReference>
<dbReference type="GO" id="GO:0070929">
    <property type="term" value="P:trans-translation"/>
    <property type="evidence" value="ECO:0007669"/>
    <property type="project" value="UniProtKB-UniRule"/>
</dbReference>
<dbReference type="CDD" id="cd09294">
    <property type="entry name" value="SmpB"/>
    <property type="match status" value="1"/>
</dbReference>
<dbReference type="Gene3D" id="2.40.280.10">
    <property type="match status" value="1"/>
</dbReference>
<dbReference type="HAMAP" id="MF_00023">
    <property type="entry name" value="SmpB"/>
    <property type="match status" value="1"/>
</dbReference>
<dbReference type="InterPro" id="IPR023620">
    <property type="entry name" value="SmpB"/>
</dbReference>
<dbReference type="InterPro" id="IPR000037">
    <property type="entry name" value="SsrA-bd_prot"/>
</dbReference>
<dbReference type="InterPro" id="IPR020081">
    <property type="entry name" value="SsrA-bd_prot_CS"/>
</dbReference>
<dbReference type="NCBIfam" id="NF003843">
    <property type="entry name" value="PRK05422.1"/>
    <property type="match status" value="1"/>
</dbReference>
<dbReference type="NCBIfam" id="TIGR00086">
    <property type="entry name" value="smpB"/>
    <property type="match status" value="1"/>
</dbReference>
<dbReference type="PANTHER" id="PTHR30308:SF2">
    <property type="entry name" value="SSRA-BINDING PROTEIN"/>
    <property type="match status" value="1"/>
</dbReference>
<dbReference type="PANTHER" id="PTHR30308">
    <property type="entry name" value="TMRNA-BINDING COMPONENT OF TRANS-TRANSLATION TAGGING COMPLEX"/>
    <property type="match status" value="1"/>
</dbReference>
<dbReference type="Pfam" id="PF01668">
    <property type="entry name" value="SmpB"/>
    <property type="match status" value="1"/>
</dbReference>
<dbReference type="SUPFAM" id="SSF74982">
    <property type="entry name" value="Small protein B (SmpB)"/>
    <property type="match status" value="1"/>
</dbReference>
<dbReference type="PROSITE" id="PS01317">
    <property type="entry name" value="SSRP"/>
    <property type="match status" value="1"/>
</dbReference>